<feature type="chain" id="PRO_0000148978" description="Methionine aminopeptidase">
    <location>
        <begin position="1"/>
        <end position="295"/>
    </location>
</feature>
<feature type="binding site" evidence="1">
    <location>
        <position position="62"/>
    </location>
    <ligand>
        <name>substrate</name>
    </ligand>
</feature>
<feature type="binding site">
    <location>
        <position position="82"/>
    </location>
    <ligand>
        <name>a divalent metal cation</name>
        <dbReference type="ChEBI" id="CHEBI:60240"/>
        <label>1</label>
    </ligand>
</feature>
<feature type="binding site">
    <location>
        <position position="93"/>
    </location>
    <ligand>
        <name>a divalent metal cation</name>
        <dbReference type="ChEBI" id="CHEBI:60240"/>
        <label>1</label>
    </ligand>
</feature>
<feature type="binding site">
    <location>
        <position position="93"/>
    </location>
    <ligand>
        <name>a divalent metal cation</name>
        <dbReference type="ChEBI" id="CHEBI:60240"/>
        <label>2</label>
        <note>catalytic</note>
    </ligand>
</feature>
<feature type="binding site">
    <location>
        <position position="153"/>
    </location>
    <ligand>
        <name>a divalent metal cation</name>
        <dbReference type="ChEBI" id="CHEBI:60240"/>
        <label>2</label>
        <note>catalytic</note>
    </ligand>
</feature>
<feature type="binding site">
    <location>
        <position position="161"/>
    </location>
    <ligand>
        <name>substrate</name>
    </ligand>
</feature>
<feature type="binding site">
    <location>
        <position position="187"/>
    </location>
    <ligand>
        <name>a divalent metal cation</name>
        <dbReference type="ChEBI" id="CHEBI:60240"/>
        <label>2</label>
        <note>catalytic</note>
    </ligand>
</feature>
<feature type="binding site">
    <location>
        <position position="280"/>
    </location>
    <ligand>
        <name>a divalent metal cation</name>
        <dbReference type="ChEBI" id="CHEBI:60240"/>
        <label>1</label>
    </ligand>
</feature>
<feature type="binding site">
    <location>
        <position position="280"/>
    </location>
    <ligand>
        <name>a divalent metal cation</name>
        <dbReference type="ChEBI" id="CHEBI:60240"/>
        <label>2</label>
        <note>catalytic</note>
    </ligand>
</feature>
<feature type="mutagenesis site" description="Reduces enzymatic activity by 96% at 37 degrees Celsius and by 88% at 87 degrees Celsius; when associated with A-173." evidence="5">
    <original>H</original>
    <variation>A</variation>
    <location>
        <position position="161"/>
    </location>
</feature>
<feature type="mutagenesis site" description="Reduces enzymatic activity by 96% at 37 degrees Celsius and by 88% at 87 degrees Celsius; when associated with A-161." evidence="5">
    <original>H</original>
    <variation>A</variation>
    <location>
        <position position="173"/>
    </location>
</feature>
<feature type="helix" evidence="8">
    <location>
        <begin position="3"/>
        <end position="23"/>
    </location>
</feature>
<feature type="helix" evidence="8">
    <location>
        <begin position="30"/>
        <end position="43"/>
    </location>
</feature>
<feature type="strand" evidence="8">
    <location>
        <begin position="47"/>
        <end position="50"/>
    </location>
</feature>
<feature type="strand" evidence="8">
    <location>
        <begin position="53"/>
        <end position="56"/>
    </location>
</feature>
<feature type="strand" evidence="8">
    <location>
        <begin position="59"/>
        <end position="61"/>
    </location>
</feature>
<feature type="strand" evidence="8">
    <location>
        <begin position="78"/>
        <end position="87"/>
    </location>
</feature>
<feature type="strand" evidence="8">
    <location>
        <begin position="90"/>
        <end position="99"/>
    </location>
</feature>
<feature type="helix" evidence="8">
    <location>
        <begin position="106"/>
        <end position="121"/>
    </location>
</feature>
<feature type="helix" evidence="8">
    <location>
        <begin position="129"/>
        <end position="140"/>
    </location>
</feature>
<feature type="turn" evidence="8">
    <location>
        <begin position="141"/>
        <end position="143"/>
    </location>
</feature>
<feature type="strand" evidence="6">
    <location>
        <begin position="148"/>
        <end position="150"/>
    </location>
</feature>
<feature type="strand" evidence="8">
    <location>
        <begin position="152"/>
        <end position="154"/>
    </location>
</feature>
<feature type="strand" evidence="8">
    <location>
        <begin position="159"/>
        <end position="161"/>
    </location>
</feature>
<feature type="strand" evidence="7">
    <location>
        <begin position="165"/>
        <end position="169"/>
    </location>
</feature>
<feature type="strand" evidence="8">
    <location>
        <begin position="183"/>
        <end position="186"/>
    </location>
</feature>
<feature type="strand" evidence="8">
    <location>
        <begin position="189"/>
        <end position="193"/>
    </location>
</feature>
<feature type="strand" evidence="8">
    <location>
        <begin position="197"/>
        <end position="208"/>
    </location>
</feature>
<feature type="helix" evidence="8">
    <location>
        <begin position="217"/>
        <end position="229"/>
    </location>
</feature>
<feature type="turn" evidence="8">
    <location>
        <begin position="230"/>
        <end position="232"/>
    </location>
</feature>
<feature type="strand" evidence="8">
    <location>
        <begin position="235"/>
        <end position="237"/>
    </location>
</feature>
<feature type="helix" evidence="8">
    <location>
        <begin position="238"/>
        <end position="240"/>
    </location>
</feature>
<feature type="turn" evidence="8">
    <location>
        <begin position="241"/>
        <end position="243"/>
    </location>
</feature>
<feature type="helix" evidence="8">
    <location>
        <begin position="246"/>
        <end position="258"/>
    </location>
</feature>
<feature type="strand" evidence="8">
    <location>
        <begin position="261"/>
        <end position="270"/>
    </location>
</feature>
<feature type="strand" evidence="8">
    <location>
        <begin position="276"/>
        <end position="278"/>
    </location>
</feature>
<feature type="strand" evidence="8">
    <location>
        <begin position="280"/>
        <end position="285"/>
    </location>
</feature>
<feature type="strand" evidence="8">
    <location>
        <begin position="287"/>
        <end position="292"/>
    </location>
</feature>
<organism>
    <name type="scientific">Pyrococcus furiosus (strain ATCC 43587 / DSM 3638 / JCM 8422 / Vc1)</name>
    <dbReference type="NCBI Taxonomy" id="186497"/>
    <lineage>
        <taxon>Archaea</taxon>
        <taxon>Methanobacteriati</taxon>
        <taxon>Methanobacteriota</taxon>
        <taxon>Thermococci</taxon>
        <taxon>Thermococcales</taxon>
        <taxon>Thermococcaceae</taxon>
        <taxon>Pyrococcus</taxon>
    </lineage>
</organism>
<evidence type="ECO:0000255" key="1">
    <source>
        <dbReference type="HAMAP-Rule" id="MF_01975"/>
    </source>
</evidence>
<evidence type="ECO:0000269" key="2">
    <source>
    </source>
</evidence>
<evidence type="ECO:0000269" key="3">
    <source>
    </source>
</evidence>
<evidence type="ECO:0000269" key="4">
    <source>
    </source>
</evidence>
<evidence type="ECO:0000269" key="5">
    <source>
    </source>
</evidence>
<evidence type="ECO:0007829" key="6">
    <source>
        <dbReference type="PDB" id="1XGM"/>
    </source>
</evidence>
<evidence type="ECO:0007829" key="7">
    <source>
        <dbReference type="PDB" id="1XGN"/>
    </source>
</evidence>
<evidence type="ECO:0007829" key="8">
    <source>
        <dbReference type="PDB" id="1XGS"/>
    </source>
</evidence>
<gene>
    <name evidence="1" type="primary">map</name>
    <name type="ordered locus">PF0541</name>
</gene>
<accession>P56218</accession>
<keyword id="KW-0002">3D-structure</keyword>
<keyword id="KW-0031">Aminopeptidase</keyword>
<keyword id="KW-0903">Direct protein sequencing</keyword>
<keyword id="KW-0378">Hydrolase</keyword>
<keyword id="KW-0479">Metal-binding</keyword>
<keyword id="KW-0645">Protease</keyword>
<keyword id="KW-1185">Reference proteome</keyword>
<reference key="1">
    <citation type="journal article" date="1999" name="Genetics">
        <title>Divergence of the hyperthermophilic archaea Pyrococcus furiosus and P. horikoshii inferred from complete genomic sequences.</title>
        <authorList>
            <person name="Maeder D.L."/>
            <person name="Weiss R.B."/>
            <person name="Dunn D.M."/>
            <person name="Cherry J.L."/>
            <person name="Gonzalez J.M."/>
            <person name="DiRuggiero J."/>
            <person name="Robb F.T."/>
        </authorList>
    </citation>
    <scope>NUCLEOTIDE SEQUENCE [LARGE SCALE GENOMIC DNA]</scope>
    <source>
        <strain>ATCC 43587 / DSM 3638 / JCM 8422 / Vc1</strain>
    </source>
</reference>
<reference key="2">
    <citation type="journal article" date="1997" name="J. Biochem.">
        <title>Methionine aminopeptidase from the hyperthermophilic Archaeon Pyrococcus furiosus: molecular cloning and overexpression in Escherichia coli of the gene, and characteristics of the enzyme.</title>
        <authorList>
            <person name="Tsunasawa S."/>
            <person name="Izu Y."/>
            <person name="Miyagi M."/>
            <person name="Kato I."/>
        </authorList>
    </citation>
    <scope>PROTEIN SEQUENCE OF 1-35</scope>
    <scope>FUNCTION</scope>
    <scope>CATALYTIC ACTIVITY</scope>
    <scope>BIOPHYSICOCHEMICAL PROPERTIES</scope>
    <scope>MASS SPECTROMETRY</scope>
    <source>
        <strain>ATCC 43587 / DSM 3638 / JCM 8422 / Vc1</strain>
    </source>
</reference>
<reference key="3">
    <citation type="journal article" date="2002" name="Biochemistry">
        <title>Overexpression and divalent metal binding properties of the methionyl aminopeptidase from Pyrococcus furiosus.</title>
        <authorList>
            <person name="Meng L."/>
            <person name="Ruebush S."/>
            <person name="D'souza V.M."/>
            <person name="Copik A.J."/>
            <person name="Tsunasawa S."/>
            <person name="Holz R.C."/>
        </authorList>
    </citation>
    <scope>COFACTOR</scope>
    <scope>BIOPHYSICOCHEMICAL PROPERTIES</scope>
</reference>
<reference key="4">
    <citation type="journal article" date="1998" name="J. Mol. Biol.">
        <title>Crystal structure of methionine aminopeptidase from hyperthermophile, Pyrococcus furiosus.</title>
        <authorList>
            <person name="Tahirov T.H."/>
            <person name="Oki H."/>
            <person name="Tsukihara T."/>
            <person name="Ogasahara K."/>
            <person name="Yutani K."/>
            <person name="Ogata K."/>
            <person name="Izu Y."/>
            <person name="Tsunasawa S."/>
            <person name="Kato I."/>
        </authorList>
    </citation>
    <scope>X-RAY CRYSTALLOGRAPHY (1.75 ANGSTROMS) IN COMPLEX WITH COBALT</scope>
    <scope>MUTAGENESIS OF HIS-161 AND HIS-173</scope>
</reference>
<reference key="5">
    <citation type="journal article" date="2005" name="Biochemistry">
        <title>EPR and X-ray crystallographic characterization of the product-bound form of the MnII-loaded methionyl aminopeptidase from Pyrococcus furiosus.</title>
        <authorList>
            <person name="Copik A.J."/>
            <person name="Nocek B.P."/>
            <person name="Swierczek S.I."/>
            <person name="Ruebush S."/>
            <person name="Jang S.B."/>
            <person name="Meng L."/>
            <person name="D'souza V.M."/>
            <person name="Peters J.W."/>
            <person name="Bennett B."/>
            <person name="Holz R.C."/>
        </authorList>
    </citation>
    <scope>X-RAY CRYSTALLOGRAPHY (2.30 ANGSTROMS) IN COMPLEX WITH MANGANESE AND METHIONINE</scope>
</reference>
<name>MAP2_PYRFU</name>
<proteinExistence type="evidence at protein level"/>
<dbReference type="EC" id="3.4.11.18" evidence="1"/>
<dbReference type="EMBL" id="AE009950">
    <property type="protein sequence ID" value="AAL80665.1"/>
    <property type="molecule type" value="Genomic_DNA"/>
</dbReference>
<dbReference type="PIR" id="JC5671">
    <property type="entry name" value="JC5671"/>
</dbReference>
<dbReference type="RefSeq" id="WP_011011659.1">
    <property type="nucleotide sequence ID" value="NZ_CP023154.1"/>
</dbReference>
<dbReference type="PDB" id="1WKM">
    <property type="method" value="X-ray"/>
    <property type="resolution" value="2.30 A"/>
    <property type="chains" value="A/B=1-295"/>
</dbReference>
<dbReference type="PDB" id="1XGM">
    <property type="method" value="X-ray"/>
    <property type="resolution" value="2.80 A"/>
    <property type="chains" value="A/B=1-295"/>
</dbReference>
<dbReference type="PDB" id="1XGN">
    <property type="method" value="X-ray"/>
    <property type="resolution" value="2.90 A"/>
    <property type="chains" value="A/B=1-295"/>
</dbReference>
<dbReference type="PDB" id="1XGO">
    <property type="method" value="X-ray"/>
    <property type="resolution" value="3.50 A"/>
    <property type="chains" value="A=1-295"/>
</dbReference>
<dbReference type="PDB" id="1XGS">
    <property type="method" value="X-ray"/>
    <property type="resolution" value="1.75 A"/>
    <property type="chains" value="A/B=1-295"/>
</dbReference>
<dbReference type="PDB" id="2DFI">
    <property type="method" value="X-ray"/>
    <property type="resolution" value="2.10 A"/>
    <property type="chains" value="A/B=1-292"/>
</dbReference>
<dbReference type="PDB" id="6LVH">
    <property type="method" value="X-ray"/>
    <property type="resolution" value="3.20 A"/>
    <property type="chains" value="A=1-295"/>
</dbReference>
<dbReference type="PDB" id="6M00">
    <property type="method" value="X-ray"/>
    <property type="resolution" value="3.20 A"/>
    <property type="chains" value="A=1-295"/>
</dbReference>
<dbReference type="PDBsum" id="1WKM"/>
<dbReference type="PDBsum" id="1XGM"/>
<dbReference type="PDBsum" id="1XGN"/>
<dbReference type="PDBsum" id="1XGO"/>
<dbReference type="PDBsum" id="1XGS"/>
<dbReference type="PDBsum" id="2DFI"/>
<dbReference type="PDBsum" id="6LVH"/>
<dbReference type="PDBsum" id="6M00"/>
<dbReference type="SMR" id="P56218"/>
<dbReference type="STRING" id="186497.PF0541"/>
<dbReference type="ChEMBL" id="CHEMBL4857"/>
<dbReference type="MEROPS" id="M24.035"/>
<dbReference type="PaxDb" id="186497-PF0541"/>
<dbReference type="GeneID" id="41712345"/>
<dbReference type="KEGG" id="pfu:PF0541"/>
<dbReference type="PATRIC" id="fig|186497.12.peg.569"/>
<dbReference type="eggNOG" id="arCOG01001">
    <property type="taxonomic scope" value="Archaea"/>
</dbReference>
<dbReference type="HOGENOM" id="CLU_015857_7_0_2"/>
<dbReference type="OrthoDB" id="372008at2157"/>
<dbReference type="PhylomeDB" id="P56218"/>
<dbReference type="BRENDA" id="3.4.11.18">
    <property type="organism ID" value="5243"/>
</dbReference>
<dbReference type="EvolutionaryTrace" id="P56218"/>
<dbReference type="Proteomes" id="UP000001013">
    <property type="component" value="Chromosome"/>
</dbReference>
<dbReference type="GO" id="GO:0005737">
    <property type="term" value="C:cytoplasm"/>
    <property type="evidence" value="ECO:0007669"/>
    <property type="project" value="TreeGrafter"/>
</dbReference>
<dbReference type="GO" id="GO:0004239">
    <property type="term" value="F:initiator methionyl aminopeptidase activity"/>
    <property type="evidence" value="ECO:0007669"/>
    <property type="project" value="UniProtKB-UniRule"/>
</dbReference>
<dbReference type="GO" id="GO:0046872">
    <property type="term" value="F:metal ion binding"/>
    <property type="evidence" value="ECO:0007669"/>
    <property type="project" value="UniProtKB-UniRule"/>
</dbReference>
<dbReference type="GO" id="GO:0070006">
    <property type="term" value="F:metalloaminopeptidase activity"/>
    <property type="evidence" value="ECO:0007669"/>
    <property type="project" value="UniProtKB-UniRule"/>
</dbReference>
<dbReference type="GO" id="GO:0006508">
    <property type="term" value="P:proteolysis"/>
    <property type="evidence" value="ECO:0007669"/>
    <property type="project" value="UniProtKB-KW"/>
</dbReference>
<dbReference type="CDD" id="cd01088">
    <property type="entry name" value="MetAP2"/>
    <property type="match status" value="1"/>
</dbReference>
<dbReference type="Gene3D" id="3.90.230.10">
    <property type="entry name" value="Creatinase/methionine aminopeptidase superfamily"/>
    <property type="match status" value="1"/>
</dbReference>
<dbReference type="Gene3D" id="1.10.10.10">
    <property type="entry name" value="Winged helix-like DNA-binding domain superfamily/Winged helix DNA-binding domain"/>
    <property type="match status" value="1"/>
</dbReference>
<dbReference type="HAMAP" id="MF_01975">
    <property type="entry name" value="MetAP_2_arc"/>
    <property type="match status" value="1"/>
</dbReference>
<dbReference type="InterPro" id="IPR036005">
    <property type="entry name" value="Creatinase/aminopeptidase-like"/>
</dbReference>
<dbReference type="InterPro" id="IPR050247">
    <property type="entry name" value="Met_Aminopeptidase_Type2"/>
</dbReference>
<dbReference type="InterPro" id="IPR028595">
    <property type="entry name" value="MetAP_archaeal"/>
</dbReference>
<dbReference type="InterPro" id="IPR000994">
    <property type="entry name" value="Pept_M24"/>
</dbReference>
<dbReference type="InterPro" id="IPR001714">
    <property type="entry name" value="Pept_M24_MAP"/>
</dbReference>
<dbReference type="InterPro" id="IPR002468">
    <property type="entry name" value="Pept_M24A_MAP2"/>
</dbReference>
<dbReference type="InterPro" id="IPR018349">
    <property type="entry name" value="Pept_M24A_MAP2_BS"/>
</dbReference>
<dbReference type="InterPro" id="IPR036388">
    <property type="entry name" value="WH-like_DNA-bd_sf"/>
</dbReference>
<dbReference type="InterPro" id="IPR036390">
    <property type="entry name" value="WH_DNA-bd_sf"/>
</dbReference>
<dbReference type="NCBIfam" id="TIGR00501">
    <property type="entry name" value="met_pdase_II"/>
    <property type="match status" value="1"/>
</dbReference>
<dbReference type="PANTHER" id="PTHR45777">
    <property type="entry name" value="METHIONINE AMINOPEPTIDASE 2"/>
    <property type="match status" value="1"/>
</dbReference>
<dbReference type="PANTHER" id="PTHR45777:SF2">
    <property type="entry name" value="METHIONINE AMINOPEPTIDASE 2"/>
    <property type="match status" value="1"/>
</dbReference>
<dbReference type="Pfam" id="PF00557">
    <property type="entry name" value="Peptidase_M24"/>
    <property type="match status" value="1"/>
</dbReference>
<dbReference type="PRINTS" id="PR00599">
    <property type="entry name" value="MAPEPTIDASE"/>
</dbReference>
<dbReference type="SUPFAM" id="SSF55920">
    <property type="entry name" value="Creatinase/aminopeptidase"/>
    <property type="match status" value="1"/>
</dbReference>
<dbReference type="SUPFAM" id="SSF46785">
    <property type="entry name" value="Winged helix' DNA-binding domain"/>
    <property type="match status" value="1"/>
</dbReference>
<dbReference type="PROSITE" id="PS01202">
    <property type="entry name" value="MAP_2"/>
    <property type="match status" value="1"/>
</dbReference>
<protein>
    <recommendedName>
        <fullName evidence="1">Methionine aminopeptidase</fullName>
        <shortName evidence="1">MAP</shortName>
        <shortName evidence="1">MetAP</shortName>
        <ecNumber evidence="1">3.4.11.18</ecNumber>
    </recommendedName>
    <alternativeName>
        <fullName evidence="1">Peptidase M</fullName>
    </alternativeName>
</protein>
<comment type="function">
    <text evidence="1 4">Removes the N-terminal methionine from nascent proteins. The N-terminal methionine is often cleaved when the second residue in the primary sequence is small and uncharged (Met-Ala-, Cys, Gly, Pro, Ser, Thr, or Val).</text>
</comment>
<comment type="catalytic activity">
    <reaction evidence="1 4">
        <text>Release of N-terminal amino acids, preferentially methionine, from peptides and arylamides.</text>
        <dbReference type="EC" id="3.4.11.18"/>
    </reaction>
</comment>
<comment type="cofactor">
    <cofactor evidence="1 2">
        <name>Co(2+)</name>
        <dbReference type="ChEBI" id="CHEBI:48828"/>
    </cofactor>
    <cofactor evidence="1 2">
        <name>Zn(2+)</name>
        <dbReference type="ChEBI" id="CHEBI:29105"/>
    </cofactor>
    <cofactor evidence="1 2">
        <name>Mn(2+)</name>
        <dbReference type="ChEBI" id="CHEBI:29035"/>
    </cofactor>
    <cofactor evidence="1 2">
        <name>Fe(2+)</name>
        <dbReference type="ChEBI" id="CHEBI:29033"/>
    </cofactor>
    <text evidence="1 2">Binds 2 divalent metal cations per subunit. Has a high-affinity and a low affinity metal-binding site. The true nature of the physiological cofactor is under debate. The enzyme is active with cobalt, zinc, manganese or divalent iron ions. Most likely, methionine aminopeptidases function as mononuclear Fe(2+)-metalloproteases under physiological conditions, and the catalytically relevant metal-binding site has been assigned to the histidine-containing high-affinity site.</text>
</comment>
<comment type="biophysicochemical properties">
    <kinetics>
        <KM evidence="2 4">9.2 mM for a Met-Ala-Ser peptide (for the Fe(2+)-complexed enzyme)</KM>
        <KM evidence="2 4">11.8 mM for a Met-Ala-Ser peptide (for the Co(2+)-complexed enzyme)</KM>
        <KM evidence="2 4">5 mM for a Met-Gly-Met-Met peptide (for the Fe(2+)-complexed enzyme)</KM>
        <KM evidence="2 4">5.1 mM for a Met-Gly-Met-Met peptide (for the Co(2+)-complexed enzyme)</KM>
        <KM evidence="2 4">1.3 mM for a Met-Ser-Ser-His-Arg-Trp-Asp-Trp peptide (for the Fe(2+)-complexed enzyme)</KM>
        <KM evidence="2 4">2 mM for a Met-Ser-Ser-His-Arg-Trp-Asp-Trp peptide (for the Co(2+)-complexed enzyme)</KM>
    </kinetics>
    <phDependence>
        <text evidence="2 4">Optimum pH is 7-8.</text>
    </phDependence>
    <temperatureDependence>
        <text evidence="2 4">Optimum temperature is about 90 degrees Celsius.</text>
    </temperatureDependence>
</comment>
<comment type="subunit">
    <text evidence="1 3 5">Monomer.</text>
</comment>
<comment type="mass spectrometry"/>
<comment type="similarity">
    <text evidence="1">Belongs to the peptidase M24A family. Methionine aminopeptidase archaeal type 2 subfamily.</text>
</comment>
<sequence>MDTEKLMKAGEIAKKVREKAIKLARPGMLLLELAESIEKMIMELGGKPAFPVNLSINEIAAHYTPYKGDTTVLKEGDYLKIDVGVHIDGFIADTAVTVRVGMEEDELMEAAKEALNAAISVARAGVEIKELGKAIENEIRKRGFKPIVNLSGHKIERYKLHAGISIPNIYRPHDNYVLKEGDVFAIEPFATIGAGQVIEVPPTLIYMYVRDVPVRVAQARFLLAKIKREYGTLPFAYRWLQNDMPEGQLKLALKTLEKAGAIYGYPVLKEIRNGIVAQFEHTIIVEKDSVIVTTE</sequence>